<feature type="chain" id="PRO_1000098578" description="Threonine--tRNA ligase">
    <location>
        <begin position="1"/>
        <end position="612"/>
    </location>
</feature>
<feature type="region of interest" description="Catalytic" evidence="1">
    <location>
        <begin position="218"/>
        <end position="509"/>
    </location>
</feature>
<feature type="binding site" evidence="1">
    <location>
        <position position="310"/>
    </location>
    <ligand>
        <name>Zn(2+)</name>
        <dbReference type="ChEBI" id="CHEBI:29105"/>
    </ligand>
</feature>
<feature type="binding site" evidence="1">
    <location>
        <position position="361"/>
    </location>
    <ligand>
        <name>Zn(2+)</name>
        <dbReference type="ChEBI" id="CHEBI:29105"/>
    </ligand>
</feature>
<feature type="binding site" evidence="1">
    <location>
        <position position="486"/>
    </location>
    <ligand>
        <name>Zn(2+)</name>
        <dbReference type="ChEBI" id="CHEBI:29105"/>
    </ligand>
</feature>
<keyword id="KW-0030">Aminoacyl-tRNA synthetase</keyword>
<keyword id="KW-0067">ATP-binding</keyword>
<keyword id="KW-0963">Cytoplasm</keyword>
<keyword id="KW-0436">Ligase</keyword>
<keyword id="KW-0479">Metal-binding</keyword>
<keyword id="KW-0547">Nucleotide-binding</keyword>
<keyword id="KW-0648">Protein biosynthesis</keyword>
<keyword id="KW-1185">Reference proteome</keyword>
<keyword id="KW-0694">RNA-binding</keyword>
<keyword id="KW-0820">tRNA-binding</keyword>
<keyword id="KW-0862">Zinc</keyword>
<evidence type="ECO:0000255" key="1">
    <source>
        <dbReference type="HAMAP-Rule" id="MF_00184"/>
    </source>
</evidence>
<reference key="1">
    <citation type="journal article" date="2009" name="J. Bacteriol.">
        <title>The complete genome sequence of Helicobacter pylori strain G27.</title>
        <authorList>
            <person name="Baltrus D.A."/>
            <person name="Amieva M.R."/>
            <person name="Covacci A."/>
            <person name="Lowe T.M."/>
            <person name="Merrell D.S."/>
            <person name="Ottemann K.M."/>
            <person name="Stein M."/>
            <person name="Salama N.R."/>
            <person name="Guillemin K."/>
        </authorList>
    </citation>
    <scope>NUCLEOTIDE SEQUENCE [LARGE SCALE GENOMIC DNA]</scope>
    <source>
        <strain>G27</strain>
    </source>
</reference>
<protein>
    <recommendedName>
        <fullName evidence="1">Threonine--tRNA ligase</fullName>
        <ecNumber evidence="1">6.1.1.3</ecNumber>
    </recommendedName>
    <alternativeName>
        <fullName evidence="1">Threonyl-tRNA synthetase</fullName>
        <shortName evidence="1">ThrRS</shortName>
    </alternativeName>
</protein>
<gene>
    <name evidence="1" type="primary">thrS</name>
    <name type="ordered locus">HPG27_112</name>
</gene>
<name>SYT_HELPG</name>
<dbReference type="EC" id="6.1.1.3" evidence="1"/>
<dbReference type="EMBL" id="CP001173">
    <property type="protein sequence ID" value="ACI26881.1"/>
    <property type="molecule type" value="Genomic_DNA"/>
</dbReference>
<dbReference type="RefSeq" id="WP_001271815.1">
    <property type="nucleotide sequence ID" value="NC_011333.1"/>
</dbReference>
<dbReference type="SMR" id="B5Z9Q1"/>
<dbReference type="KEGG" id="hpg:HPG27_112"/>
<dbReference type="HOGENOM" id="CLU_008554_0_1_7"/>
<dbReference type="Proteomes" id="UP000001735">
    <property type="component" value="Chromosome"/>
</dbReference>
<dbReference type="GO" id="GO:0005829">
    <property type="term" value="C:cytosol"/>
    <property type="evidence" value="ECO:0007669"/>
    <property type="project" value="TreeGrafter"/>
</dbReference>
<dbReference type="GO" id="GO:0005524">
    <property type="term" value="F:ATP binding"/>
    <property type="evidence" value="ECO:0007669"/>
    <property type="project" value="UniProtKB-UniRule"/>
</dbReference>
<dbReference type="GO" id="GO:0046872">
    <property type="term" value="F:metal ion binding"/>
    <property type="evidence" value="ECO:0007669"/>
    <property type="project" value="UniProtKB-KW"/>
</dbReference>
<dbReference type="GO" id="GO:0004829">
    <property type="term" value="F:threonine-tRNA ligase activity"/>
    <property type="evidence" value="ECO:0007669"/>
    <property type="project" value="UniProtKB-UniRule"/>
</dbReference>
<dbReference type="GO" id="GO:0000049">
    <property type="term" value="F:tRNA binding"/>
    <property type="evidence" value="ECO:0007669"/>
    <property type="project" value="UniProtKB-KW"/>
</dbReference>
<dbReference type="GO" id="GO:0006435">
    <property type="term" value="P:threonyl-tRNA aminoacylation"/>
    <property type="evidence" value="ECO:0007669"/>
    <property type="project" value="UniProtKB-UniRule"/>
</dbReference>
<dbReference type="CDD" id="cd00860">
    <property type="entry name" value="ThrRS_anticodon"/>
    <property type="match status" value="1"/>
</dbReference>
<dbReference type="CDD" id="cd00771">
    <property type="entry name" value="ThrRS_core"/>
    <property type="match status" value="1"/>
</dbReference>
<dbReference type="FunFam" id="3.30.930.10:FF:000019">
    <property type="entry name" value="Threonine--tRNA ligase"/>
    <property type="match status" value="1"/>
</dbReference>
<dbReference type="FunFam" id="3.30.980.10:FF:000005">
    <property type="entry name" value="Threonyl-tRNA synthetase, mitochondrial"/>
    <property type="match status" value="1"/>
</dbReference>
<dbReference type="Gene3D" id="3.30.54.20">
    <property type="match status" value="1"/>
</dbReference>
<dbReference type="Gene3D" id="3.40.50.800">
    <property type="entry name" value="Anticodon-binding domain"/>
    <property type="match status" value="1"/>
</dbReference>
<dbReference type="Gene3D" id="3.30.930.10">
    <property type="entry name" value="Bira Bifunctional Protein, Domain 2"/>
    <property type="match status" value="1"/>
</dbReference>
<dbReference type="Gene3D" id="3.30.980.10">
    <property type="entry name" value="Threonyl-trna Synthetase, Chain A, domain 2"/>
    <property type="match status" value="1"/>
</dbReference>
<dbReference type="HAMAP" id="MF_00184">
    <property type="entry name" value="Thr_tRNA_synth"/>
    <property type="match status" value="1"/>
</dbReference>
<dbReference type="InterPro" id="IPR002314">
    <property type="entry name" value="aa-tRNA-synt_IIb"/>
</dbReference>
<dbReference type="InterPro" id="IPR006195">
    <property type="entry name" value="aa-tRNA-synth_II"/>
</dbReference>
<dbReference type="InterPro" id="IPR045864">
    <property type="entry name" value="aa-tRNA-synth_II/BPL/LPL"/>
</dbReference>
<dbReference type="InterPro" id="IPR004154">
    <property type="entry name" value="Anticodon-bd"/>
</dbReference>
<dbReference type="InterPro" id="IPR036621">
    <property type="entry name" value="Anticodon-bd_dom_sf"/>
</dbReference>
<dbReference type="InterPro" id="IPR002320">
    <property type="entry name" value="Thr-tRNA-ligase_IIa"/>
</dbReference>
<dbReference type="InterPro" id="IPR018163">
    <property type="entry name" value="Thr/Ala-tRNA-synth_IIc_edit"/>
</dbReference>
<dbReference type="InterPro" id="IPR047246">
    <property type="entry name" value="ThrRS_anticodon"/>
</dbReference>
<dbReference type="InterPro" id="IPR033728">
    <property type="entry name" value="ThrRS_core"/>
</dbReference>
<dbReference type="InterPro" id="IPR012947">
    <property type="entry name" value="tRNA_SAD"/>
</dbReference>
<dbReference type="NCBIfam" id="TIGR00418">
    <property type="entry name" value="thrS"/>
    <property type="match status" value="1"/>
</dbReference>
<dbReference type="PANTHER" id="PTHR11451:SF44">
    <property type="entry name" value="THREONINE--TRNA LIGASE, CHLOROPLASTIC_MITOCHONDRIAL 2"/>
    <property type="match status" value="1"/>
</dbReference>
<dbReference type="PANTHER" id="PTHR11451">
    <property type="entry name" value="THREONINE-TRNA LIGASE"/>
    <property type="match status" value="1"/>
</dbReference>
<dbReference type="Pfam" id="PF03129">
    <property type="entry name" value="HGTP_anticodon"/>
    <property type="match status" value="1"/>
</dbReference>
<dbReference type="Pfam" id="PF00587">
    <property type="entry name" value="tRNA-synt_2b"/>
    <property type="match status" value="1"/>
</dbReference>
<dbReference type="Pfam" id="PF07973">
    <property type="entry name" value="tRNA_SAD"/>
    <property type="match status" value="1"/>
</dbReference>
<dbReference type="PRINTS" id="PR01047">
    <property type="entry name" value="TRNASYNTHTHR"/>
</dbReference>
<dbReference type="SMART" id="SM00863">
    <property type="entry name" value="tRNA_SAD"/>
    <property type="match status" value="1"/>
</dbReference>
<dbReference type="SUPFAM" id="SSF52954">
    <property type="entry name" value="Class II aaRS ABD-related"/>
    <property type="match status" value="1"/>
</dbReference>
<dbReference type="SUPFAM" id="SSF55681">
    <property type="entry name" value="Class II aaRS and biotin synthetases"/>
    <property type="match status" value="1"/>
</dbReference>
<dbReference type="SUPFAM" id="SSF55186">
    <property type="entry name" value="ThrRS/AlaRS common domain"/>
    <property type="match status" value="1"/>
</dbReference>
<dbReference type="PROSITE" id="PS50862">
    <property type="entry name" value="AA_TRNA_LIGASE_II"/>
    <property type="match status" value="1"/>
</dbReference>
<proteinExistence type="inferred from homology"/>
<sequence>MSAELIAVYKDEQIIDLESAKVLGLSDGIKALKGTEPIYFDDSPLALEVIRHSCAHLLAQSLKALYPDAKFFVGPVVEEGFYYDFKTASKISEEDLPKIEAKMKEFAKLKLAITKEVLTREQALERFKGDELKHAVMSKISGDAFGVYQQGEFEDLCKGPHLPNTRFLNHFKLTKLAGAYLGGDESNEMLIRIYGIAFATKEGLKDYLFQIEEAKKRDHRKLGVELGLFSFDDEIGAGLPLWLPKGARLRKRIEDLLSKALLLRGYEPVKGPEILKSDVWKISGHYDNYKENMYFTTIDEQEYGIKPMNCVGHIKVYQSALHSYRDLPLRFYEYGVVHRHEKSGVLHGLLRVREFTQDDAHIFCSFEQIQSEVSAILDFTHKIMQAFDFSYEMELSTRPAKSIGDDKVWEKATSALKEALKEHRIDYKIDEGGGAFYGPKIDIKITDALKRKWQCGTIQVDMNLPERFKLAFTNERNHAEQPVMIHRAILGSFERFIAILSEHFGGNFPFFVAPTQIALIPINEEHHVFALKLKEALKKRDIFVEVLDKNDSLNKKVRLAEKQKIPMILVLGNEEVETEILSIRDREKQAQYKMPLKEFLSMVESKMQEVSF</sequence>
<accession>B5Z9Q1</accession>
<comment type="function">
    <text evidence="1">Catalyzes the attachment of threonine to tRNA(Thr) in a two-step reaction: L-threonine is first activated by ATP to form Thr-AMP and then transferred to the acceptor end of tRNA(Thr). Also edits incorrectly charged L-seryl-tRNA(Thr).</text>
</comment>
<comment type="catalytic activity">
    <reaction evidence="1">
        <text>tRNA(Thr) + L-threonine + ATP = L-threonyl-tRNA(Thr) + AMP + diphosphate + H(+)</text>
        <dbReference type="Rhea" id="RHEA:24624"/>
        <dbReference type="Rhea" id="RHEA-COMP:9670"/>
        <dbReference type="Rhea" id="RHEA-COMP:9704"/>
        <dbReference type="ChEBI" id="CHEBI:15378"/>
        <dbReference type="ChEBI" id="CHEBI:30616"/>
        <dbReference type="ChEBI" id="CHEBI:33019"/>
        <dbReference type="ChEBI" id="CHEBI:57926"/>
        <dbReference type="ChEBI" id="CHEBI:78442"/>
        <dbReference type="ChEBI" id="CHEBI:78534"/>
        <dbReference type="ChEBI" id="CHEBI:456215"/>
        <dbReference type="EC" id="6.1.1.3"/>
    </reaction>
</comment>
<comment type="cofactor">
    <cofactor evidence="1">
        <name>Zn(2+)</name>
        <dbReference type="ChEBI" id="CHEBI:29105"/>
    </cofactor>
    <text evidence="1">Binds 1 zinc ion per subunit.</text>
</comment>
<comment type="subunit">
    <text evidence="1">Homodimer.</text>
</comment>
<comment type="subcellular location">
    <subcellularLocation>
        <location evidence="1">Cytoplasm</location>
    </subcellularLocation>
</comment>
<comment type="similarity">
    <text evidence="1">Belongs to the class-II aminoacyl-tRNA synthetase family.</text>
</comment>
<organism>
    <name type="scientific">Helicobacter pylori (strain G27)</name>
    <dbReference type="NCBI Taxonomy" id="563041"/>
    <lineage>
        <taxon>Bacteria</taxon>
        <taxon>Pseudomonadati</taxon>
        <taxon>Campylobacterota</taxon>
        <taxon>Epsilonproteobacteria</taxon>
        <taxon>Campylobacterales</taxon>
        <taxon>Helicobacteraceae</taxon>
        <taxon>Helicobacter</taxon>
    </lineage>
</organism>